<feature type="signal peptide" evidence="2">
    <location>
        <begin position="1"/>
        <end position="22"/>
    </location>
</feature>
<feature type="propeptide" id="PRO_0000414969" evidence="7">
    <location>
        <begin position="23"/>
        <end position="68"/>
    </location>
</feature>
<feature type="peptide" id="PRO_0000414970" description="Conotoxin Cal6.1b" evidence="7">
    <location>
        <begin position="71"/>
        <end position="97"/>
    </location>
</feature>
<feature type="region of interest" description="Disordered" evidence="3">
    <location>
        <begin position="22"/>
        <end position="46"/>
    </location>
</feature>
<feature type="disulfide bond" evidence="1">
    <location>
        <begin position="71"/>
        <end position="87"/>
    </location>
</feature>
<feature type="disulfide bond" evidence="1">
    <location>
        <begin position="78"/>
        <end position="91"/>
    </location>
</feature>
<feature type="disulfide bond" evidence="1">
    <location>
        <begin position="86"/>
        <end position="96"/>
    </location>
</feature>
<dbReference type="EMBL" id="FJ959149">
    <property type="protein sequence ID" value="ADB93119.1"/>
    <property type="molecule type" value="Genomic_DNA"/>
</dbReference>
<dbReference type="EMBL" id="GU306160">
    <property type="protein sequence ID" value="ADB04239.1"/>
    <property type="molecule type" value="mRNA"/>
</dbReference>
<dbReference type="ConoServer" id="3970">
    <property type="toxin name" value="Cal6.1b precursor"/>
</dbReference>
<dbReference type="GO" id="GO:0005576">
    <property type="term" value="C:extracellular region"/>
    <property type="evidence" value="ECO:0007669"/>
    <property type="project" value="UniProtKB-SubCell"/>
</dbReference>
<dbReference type="GO" id="GO:0099106">
    <property type="term" value="F:ion channel regulator activity"/>
    <property type="evidence" value="ECO:0007669"/>
    <property type="project" value="UniProtKB-KW"/>
</dbReference>
<dbReference type="GO" id="GO:0090729">
    <property type="term" value="F:toxin activity"/>
    <property type="evidence" value="ECO:0007669"/>
    <property type="project" value="UniProtKB-KW"/>
</dbReference>
<accession>D2Y496</accession>
<accession>D6C4K7</accession>
<reference key="1">
    <citation type="journal article" date="2010" name="Mol. Phylogenet. Evol.">
        <title>Evolution of Conus peptide toxins: analysis of Conus californicus Reeve, 1844.</title>
        <authorList>
            <person name="Biggs J.S."/>
            <person name="Watkins M."/>
            <person name="Puillandre N."/>
            <person name="Ownby J.P."/>
            <person name="Lopez-Vera E."/>
            <person name="Christensen S."/>
            <person name="Moreno K.J."/>
            <person name="Bernaldez J."/>
            <person name="Licea-Navarro A."/>
            <person name="Corneli P.S."/>
            <person name="Olivera B.M."/>
        </authorList>
    </citation>
    <scope>NUCLEOTIDE SEQUENCE [GENOMIC DNA]</scope>
</reference>
<reference key="2">
    <citation type="journal article" date="2011" name="Toxicon">
        <title>Diversity of conotoxin types from Conus californicus reflects a diversity of prey types and a novel evolutionary history.</title>
        <authorList>
            <person name="Elliger C.A."/>
            <person name="Richmond T.A."/>
            <person name="Lebaric Z.N."/>
            <person name="Pierce N.T."/>
            <person name="Sweedler J.V."/>
            <person name="Gilly W.F."/>
        </authorList>
    </citation>
    <scope>NUCLEOTIDE SEQUENCE [MRNA] OF 63-97</scope>
    <source>
        <tissue>Venom duct</tissue>
    </source>
</reference>
<sequence length="97" mass="10663">MKLTTVLVVALLVLAACQFTVTDNSGDDPENPSLRSAGENQNPDSTKTITAWATRDMTNMRRGLNRPSKRCLAGSARCEFHKPSTCCSGHCIFWWCA</sequence>
<name>O161B_CONCL</name>
<organism>
    <name type="scientific">Californiconus californicus</name>
    <name type="common">California cone</name>
    <name type="synonym">Conus californicus</name>
    <dbReference type="NCBI Taxonomy" id="1736779"/>
    <lineage>
        <taxon>Eukaryota</taxon>
        <taxon>Metazoa</taxon>
        <taxon>Spiralia</taxon>
        <taxon>Lophotrochozoa</taxon>
        <taxon>Mollusca</taxon>
        <taxon>Gastropoda</taxon>
        <taxon>Caenogastropoda</taxon>
        <taxon>Neogastropoda</taxon>
        <taxon>Conoidea</taxon>
        <taxon>Conidae</taxon>
        <taxon>Californiconus</taxon>
    </lineage>
</organism>
<proteinExistence type="inferred from homology"/>
<evidence type="ECO:0000250" key="1"/>
<evidence type="ECO:0000255" key="2"/>
<evidence type="ECO:0000256" key="3">
    <source>
        <dbReference type="SAM" id="MobiDB-lite"/>
    </source>
</evidence>
<evidence type="ECO:0000303" key="4">
    <source>
    </source>
</evidence>
<evidence type="ECO:0000303" key="5">
    <source>
    </source>
</evidence>
<evidence type="ECO:0000305" key="6"/>
<evidence type="ECO:0000305" key="7">
    <source>
    </source>
</evidence>
<comment type="function">
    <text evidence="6">Probable neurotoxin with unknown target. Possibly targets ion channels.</text>
</comment>
<comment type="subcellular location">
    <subcellularLocation>
        <location evidence="7">Secreted</location>
    </subcellularLocation>
</comment>
<comment type="tissue specificity">
    <text evidence="7">Expressed by the venom duct.</text>
</comment>
<comment type="domain">
    <text evidence="1">The presence of a 'disulfide through disulfide knot' structurally defines this protein as a knottin.</text>
</comment>
<comment type="domain">
    <text>The cysteine framework is VI/VII (C-C-CC-C-C).</text>
</comment>
<comment type="similarity">
    <text evidence="6">Belongs to the conotoxin O1 superfamily.</text>
</comment>
<keyword id="KW-0165">Cleavage on pair of basic residues</keyword>
<keyword id="KW-1015">Disulfide bond</keyword>
<keyword id="KW-0872">Ion channel impairing toxin</keyword>
<keyword id="KW-0960">Knottin</keyword>
<keyword id="KW-0528">Neurotoxin</keyword>
<keyword id="KW-0964">Secreted</keyword>
<keyword id="KW-0732">Signal</keyword>
<keyword id="KW-0800">Toxin</keyword>
<protein>
    <recommendedName>
        <fullName evidence="5">Conotoxin Cal6.1b</fullName>
    </recommendedName>
    <alternativeName>
        <fullName evidence="4">Conotoxin Cl6.1a</fullName>
    </alternativeName>
</protein>